<accession>A5CXL0</accession>
<comment type="function">
    <text evidence="1">Binds the lower part of the 30S subunit head. Binds mRNA in the 70S ribosome, positioning it for translation.</text>
</comment>
<comment type="subunit">
    <text evidence="1">Part of the 30S ribosomal subunit. Forms a tight complex with proteins S10 and S14.</text>
</comment>
<comment type="similarity">
    <text evidence="1">Belongs to the universal ribosomal protein uS3 family.</text>
</comment>
<organism>
    <name type="scientific">Vesicomyosocius okutanii subsp. Calyptogena okutanii (strain HA)</name>
    <dbReference type="NCBI Taxonomy" id="412965"/>
    <lineage>
        <taxon>Bacteria</taxon>
        <taxon>Pseudomonadati</taxon>
        <taxon>Pseudomonadota</taxon>
        <taxon>Gammaproteobacteria</taxon>
        <taxon>Candidatus Pseudothioglobaceae</taxon>
        <taxon>Candidatus Vesicomyosocius</taxon>
    </lineage>
</organism>
<feature type="chain" id="PRO_1000086171" description="Small ribosomal subunit protein uS3">
    <location>
        <begin position="1"/>
        <end position="230"/>
    </location>
</feature>
<feature type="domain" description="KH type-2" evidence="1">
    <location>
        <begin position="39"/>
        <end position="107"/>
    </location>
</feature>
<dbReference type="EMBL" id="AP009247">
    <property type="protein sequence ID" value="BAF61305.1"/>
    <property type="molecule type" value="Genomic_DNA"/>
</dbReference>
<dbReference type="RefSeq" id="WP_011929575.1">
    <property type="nucleotide sequence ID" value="NC_009465.1"/>
</dbReference>
<dbReference type="SMR" id="A5CXL0"/>
<dbReference type="STRING" id="412965.COSY_0175"/>
<dbReference type="KEGG" id="vok:COSY_0175"/>
<dbReference type="eggNOG" id="COG0092">
    <property type="taxonomic scope" value="Bacteria"/>
</dbReference>
<dbReference type="HOGENOM" id="CLU_058591_0_2_6"/>
<dbReference type="OrthoDB" id="9806396at2"/>
<dbReference type="Proteomes" id="UP000000247">
    <property type="component" value="Chromosome"/>
</dbReference>
<dbReference type="GO" id="GO:0022627">
    <property type="term" value="C:cytosolic small ribosomal subunit"/>
    <property type="evidence" value="ECO:0007669"/>
    <property type="project" value="TreeGrafter"/>
</dbReference>
<dbReference type="GO" id="GO:0003729">
    <property type="term" value="F:mRNA binding"/>
    <property type="evidence" value="ECO:0007669"/>
    <property type="project" value="UniProtKB-UniRule"/>
</dbReference>
<dbReference type="GO" id="GO:0019843">
    <property type="term" value="F:rRNA binding"/>
    <property type="evidence" value="ECO:0007669"/>
    <property type="project" value="UniProtKB-UniRule"/>
</dbReference>
<dbReference type="GO" id="GO:0003735">
    <property type="term" value="F:structural constituent of ribosome"/>
    <property type="evidence" value="ECO:0007669"/>
    <property type="project" value="InterPro"/>
</dbReference>
<dbReference type="GO" id="GO:0006412">
    <property type="term" value="P:translation"/>
    <property type="evidence" value="ECO:0007669"/>
    <property type="project" value="UniProtKB-UniRule"/>
</dbReference>
<dbReference type="CDD" id="cd02412">
    <property type="entry name" value="KH-II_30S_S3"/>
    <property type="match status" value="1"/>
</dbReference>
<dbReference type="FunFam" id="3.30.300.20:FF:000001">
    <property type="entry name" value="30S ribosomal protein S3"/>
    <property type="match status" value="1"/>
</dbReference>
<dbReference type="Gene3D" id="3.30.300.20">
    <property type="match status" value="1"/>
</dbReference>
<dbReference type="Gene3D" id="3.30.1140.32">
    <property type="entry name" value="Ribosomal protein S3, C-terminal domain"/>
    <property type="match status" value="1"/>
</dbReference>
<dbReference type="HAMAP" id="MF_01309_B">
    <property type="entry name" value="Ribosomal_uS3_B"/>
    <property type="match status" value="1"/>
</dbReference>
<dbReference type="InterPro" id="IPR004087">
    <property type="entry name" value="KH_dom"/>
</dbReference>
<dbReference type="InterPro" id="IPR015946">
    <property type="entry name" value="KH_dom-like_a/b"/>
</dbReference>
<dbReference type="InterPro" id="IPR004044">
    <property type="entry name" value="KH_dom_type_2"/>
</dbReference>
<dbReference type="InterPro" id="IPR009019">
    <property type="entry name" value="KH_sf_prok-type"/>
</dbReference>
<dbReference type="InterPro" id="IPR036419">
    <property type="entry name" value="Ribosomal_S3_C_sf"/>
</dbReference>
<dbReference type="InterPro" id="IPR005704">
    <property type="entry name" value="Ribosomal_uS3_bac-typ"/>
</dbReference>
<dbReference type="InterPro" id="IPR001351">
    <property type="entry name" value="Ribosomal_uS3_C"/>
</dbReference>
<dbReference type="InterPro" id="IPR018280">
    <property type="entry name" value="Ribosomal_uS3_CS"/>
</dbReference>
<dbReference type="NCBIfam" id="TIGR01009">
    <property type="entry name" value="rpsC_bact"/>
    <property type="match status" value="1"/>
</dbReference>
<dbReference type="PANTHER" id="PTHR11760">
    <property type="entry name" value="30S/40S RIBOSOMAL PROTEIN S3"/>
    <property type="match status" value="1"/>
</dbReference>
<dbReference type="PANTHER" id="PTHR11760:SF19">
    <property type="entry name" value="SMALL RIBOSOMAL SUBUNIT PROTEIN US3C"/>
    <property type="match status" value="1"/>
</dbReference>
<dbReference type="Pfam" id="PF07650">
    <property type="entry name" value="KH_2"/>
    <property type="match status" value="1"/>
</dbReference>
<dbReference type="Pfam" id="PF00189">
    <property type="entry name" value="Ribosomal_S3_C"/>
    <property type="match status" value="1"/>
</dbReference>
<dbReference type="SMART" id="SM00322">
    <property type="entry name" value="KH"/>
    <property type="match status" value="1"/>
</dbReference>
<dbReference type="SUPFAM" id="SSF54814">
    <property type="entry name" value="Prokaryotic type KH domain (KH-domain type II)"/>
    <property type="match status" value="1"/>
</dbReference>
<dbReference type="SUPFAM" id="SSF54821">
    <property type="entry name" value="Ribosomal protein S3 C-terminal domain"/>
    <property type="match status" value="1"/>
</dbReference>
<dbReference type="PROSITE" id="PS50823">
    <property type="entry name" value="KH_TYPE_2"/>
    <property type="match status" value="1"/>
</dbReference>
<dbReference type="PROSITE" id="PS00548">
    <property type="entry name" value="RIBOSOMAL_S3"/>
    <property type="match status" value="1"/>
</dbReference>
<sequence length="230" mass="25945">MGQKVNPKGIRLGIIKDWDSKWYASSKDYSKYLLSDIKVRNYLFKKLINASVSRVQIGRLVNNAKVTIYTARPGIVIGKKGADIEQLKLIVSKMMGIPVHINIEEIKKPELDARLVAENIAQQLEKRVMYRRAVKRVLGNATRLGAQGIKVMVSGRLNGAEIARSEWYREGRVPLHTFRADVDYSSYGAKTQYGVIGIKVWIFKGEILDHKKGTLDEVAHRGAINQIAKK</sequence>
<evidence type="ECO:0000255" key="1">
    <source>
        <dbReference type="HAMAP-Rule" id="MF_01309"/>
    </source>
</evidence>
<evidence type="ECO:0000305" key="2"/>
<protein>
    <recommendedName>
        <fullName evidence="1">Small ribosomal subunit protein uS3</fullName>
    </recommendedName>
    <alternativeName>
        <fullName evidence="2">30S ribosomal protein S3</fullName>
    </alternativeName>
</protein>
<proteinExistence type="inferred from homology"/>
<gene>
    <name evidence="1" type="primary">rpsC</name>
    <name type="ordered locus">COSY_0175</name>
</gene>
<keyword id="KW-1185">Reference proteome</keyword>
<keyword id="KW-0687">Ribonucleoprotein</keyword>
<keyword id="KW-0689">Ribosomal protein</keyword>
<keyword id="KW-0694">RNA-binding</keyword>
<keyword id="KW-0699">rRNA-binding</keyword>
<name>RS3_VESOH</name>
<reference key="1">
    <citation type="journal article" date="2007" name="Curr. Biol.">
        <title>Reduced genome of the thioautotrophic intracellular symbiont in a deep-sea clam, Calyptogena okutanii.</title>
        <authorList>
            <person name="Kuwahara H."/>
            <person name="Yoshida T."/>
            <person name="Takaki Y."/>
            <person name="Shimamura S."/>
            <person name="Nishi S."/>
            <person name="Harada M."/>
            <person name="Matsuyama K."/>
            <person name="Takishita K."/>
            <person name="Kawato M."/>
            <person name="Uematsu K."/>
            <person name="Fujiwara Y."/>
            <person name="Sato T."/>
            <person name="Kato C."/>
            <person name="Kitagawa M."/>
            <person name="Kato I."/>
            <person name="Maruyama T."/>
        </authorList>
    </citation>
    <scope>NUCLEOTIDE SEQUENCE [LARGE SCALE GENOMIC DNA]</scope>
    <source>
        <strain>HA</strain>
    </source>
</reference>